<proteinExistence type="inferred from homology"/>
<dbReference type="EC" id="2.8.4.3" evidence="1"/>
<dbReference type="EMBL" id="BA000026">
    <property type="protein sequence ID" value="BAC44587.1"/>
    <property type="molecule type" value="Genomic_DNA"/>
</dbReference>
<dbReference type="SMR" id="Q8EUX4"/>
<dbReference type="FunCoup" id="Q8EUX4">
    <property type="interactions" value="253"/>
</dbReference>
<dbReference type="STRING" id="272633.gene:10731916"/>
<dbReference type="KEGG" id="mpe:MYPE7940"/>
<dbReference type="eggNOG" id="COG0621">
    <property type="taxonomic scope" value="Bacteria"/>
</dbReference>
<dbReference type="HOGENOM" id="CLU_018697_2_0_14"/>
<dbReference type="InParanoid" id="Q8EUX4"/>
<dbReference type="Proteomes" id="UP000002522">
    <property type="component" value="Chromosome"/>
</dbReference>
<dbReference type="GO" id="GO:0005829">
    <property type="term" value="C:cytosol"/>
    <property type="evidence" value="ECO:0007669"/>
    <property type="project" value="TreeGrafter"/>
</dbReference>
<dbReference type="GO" id="GO:0051539">
    <property type="term" value="F:4 iron, 4 sulfur cluster binding"/>
    <property type="evidence" value="ECO:0007669"/>
    <property type="project" value="UniProtKB-UniRule"/>
</dbReference>
<dbReference type="GO" id="GO:0046872">
    <property type="term" value="F:metal ion binding"/>
    <property type="evidence" value="ECO:0007669"/>
    <property type="project" value="UniProtKB-KW"/>
</dbReference>
<dbReference type="GO" id="GO:0035597">
    <property type="term" value="F:N6-isopentenyladenosine methylthiotransferase activity"/>
    <property type="evidence" value="ECO:0007669"/>
    <property type="project" value="TreeGrafter"/>
</dbReference>
<dbReference type="CDD" id="cd01335">
    <property type="entry name" value="Radical_SAM"/>
    <property type="match status" value="1"/>
</dbReference>
<dbReference type="FunFam" id="3.40.50.12160:FF:000006">
    <property type="entry name" value="tRNA-2-methylthio-N(6)-dimethylallyladenosine synthase"/>
    <property type="match status" value="1"/>
</dbReference>
<dbReference type="FunFam" id="3.80.30.20:FF:000001">
    <property type="entry name" value="tRNA-2-methylthio-N(6)-dimethylallyladenosine synthase 2"/>
    <property type="match status" value="1"/>
</dbReference>
<dbReference type="Gene3D" id="3.40.50.12160">
    <property type="entry name" value="Methylthiotransferase, N-terminal domain"/>
    <property type="match status" value="1"/>
</dbReference>
<dbReference type="Gene3D" id="3.80.30.20">
    <property type="entry name" value="tm_1862 like domain"/>
    <property type="match status" value="1"/>
</dbReference>
<dbReference type="HAMAP" id="MF_01864">
    <property type="entry name" value="tRNA_metthiotr_MiaB"/>
    <property type="match status" value="1"/>
</dbReference>
<dbReference type="InterPro" id="IPR006638">
    <property type="entry name" value="Elp3/MiaA/NifB-like_rSAM"/>
</dbReference>
<dbReference type="InterPro" id="IPR005839">
    <property type="entry name" value="Methylthiotransferase"/>
</dbReference>
<dbReference type="InterPro" id="IPR020612">
    <property type="entry name" value="Methylthiotransferase_CS"/>
</dbReference>
<dbReference type="InterPro" id="IPR013848">
    <property type="entry name" value="Methylthiotransferase_N"/>
</dbReference>
<dbReference type="InterPro" id="IPR038135">
    <property type="entry name" value="Methylthiotransferase_N_sf"/>
</dbReference>
<dbReference type="InterPro" id="IPR006463">
    <property type="entry name" value="MiaB_methiolase"/>
</dbReference>
<dbReference type="InterPro" id="IPR007197">
    <property type="entry name" value="rSAM"/>
</dbReference>
<dbReference type="InterPro" id="IPR023404">
    <property type="entry name" value="rSAM_horseshoe"/>
</dbReference>
<dbReference type="InterPro" id="IPR002792">
    <property type="entry name" value="TRAM_dom"/>
</dbReference>
<dbReference type="NCBIfam" id="TIGR01574">
    <property type="entry name" value="miaB-methiolase"/>
    <property type="match status" value="1"/>
</dbReference>
<dbReference type="NCBIfam" id="TIGR00089">
    <property type="entry name" value="MiaB/RimO family radical SAM methylthiotransferase"/>
    <property type="match status" value="1"/>
</dbReference>
<dbReference type="PANTHER" id="PTHR43020">
    <property type="entry name" value="CDK5 REGULATORY SUBUNIT-ASSOCIATED PROTEIN 1"/>
    <property type="match status" value="1"/>
</dbReference>
<dbReference type="PANTHER" id="PTHR43020:SF2">
    <property type="entry name" value="MITOCHONDRIAL TRNA METHYLTHIOTRANSFERASE CDK5RAP1"/>
    <property type="match status" value="1"/>
</dbReference>
<dbReference type="Pfam" id="PF04055">
    <property type="entry name" value="Radical_SAM"/>
    <property type="match status" value="1"/>
</dbReference>
<dbReference type="Pfam" id="PF01938">
    <property type="entry name" value="TRAM"/>
    <property type="match status" value="1"/>
</dbReference>
<dbReference type="Pfam" id="PF00919">
    <property type="entry name" value="UPF0004"/>
    <property type="match status" value="1"/>
</dbReference>
<dbReference type="SFLD" id="SFLDF00273">
    <property type="entry name" value="(dimethylallyl)adenosine_tRNA"/>
    <property type="match status" value="1"/>
</dbReference>
<dbReference type="SFLD" id="SFLDG01082">
    <property type="entry name" value="B12-binding_domain_containing"/>
    <property type="match status" value="1"/>
</dbReference>
<dbReference type="SFLD" id="SFLDG01061">
    <property type="entry name" value="methylthiotransferase"/>
    <property type="match status" value="1"/>
</dbReference>
<dbReference type="SMART" id="SM00729">
    <property type="entry name" value="Elp3"/>
    <property type="match status" value="1"/>
</dbReference>
<dbReference type="SUPFAM" id="SSF102114">
    <property type="entry name" value="Radical SAM enzymes"/>
    <property type="match status" value="1"/>
</dbReference>
<dbReference type="PROSITE" id="PS51449">
    <property type="entry name" value="MTTASE_N"/>
    <property type="match status" value="1"/>
</dbReference>
<dbReference type="PROSITE" id="PS01278">
    <property type="entry name" value="MTTASE_RADICAL"/>
    <property type="match status" value="1"/>
</dbReference>
<dbReference type="PROSITE" id="PS51918">
    <property type="entry name" value="RADICAL_SAM"/>
    <property type="match status" value="1"/>
</dbReference>
<dbReference type="PROSITE" id="PS50926">
    <property type="entry name" value="TRAM"/>
    <property type="match status" value="1"/>
</dbReference>
<evidence type="ECO:0000255" key="1">
    <source>
        <dbReference type="HAMAP-Rule" id="MF_01864"/>
    </source>
</evidence>
<evidence type="ECO:0000255" key="2">
    <source>
        <dbReference type="PROSITE-ProRule" id="PRU01266"/>
    </source>
</evidence>
<name>MIAB_MALP2</name>
<gene>
    <name evidence="1" type="primary">miaB</name>
    <name type="ordered locus">MYPE7940</name>
</gene>
<comment type="function">
    <text evidence="1">Catalyzes the methylthiolation of N6-(dimethylallyl)adenosine (i(6)A), leading to the formation of 2-methylthio-N6-(dimethylallyl)adenosine (ms(2)i(6)A) at position 37 in tRNAs that read codons beginning with uridine.</text>
</comment>
<comment type="catalytic activity">
    <reaction evidence="1">
        <text>N(6)-dimethylallyladenosine(37) in tRNA + (sulfur carrier)-SH + AH2 + 2 S-adenosyl-L-methionine = 2-methylsulfanyl-N(6)-dimethylallyladenosine(37) in tRNA + (sulfur carrier)-H + 5'-deoxyadenosine + L-methionine + A + S-adenosyl-L-homocysteine + 2 H(+)</text>
        <dbReference type="Rhea" id="RHEA:37067"/>
        <dbReference type="Rhea" id="RHEA-COMP:10375"/>
        <dbReference type="Rhea" id="RHEA-COMP:10376"/>
        <dbReference type="Rhea" id="RHEA-COMP:14737"/>
        <dbReference type="Rhea" id="RHEA-COMP:14739"/>
        <dbReference type="ChEBI" id="CHEBI:13193"/>
        <dbReference type="ChEBI" id="CHEBI:15378"/>
        <dbReference type="ChEBI" id="CHEBI:17319"/>
        <dbReference type="ChEBI" id="CHEBI:17499"/>
        <dbReference type="ChEBI" id="CHEBI:29917"/>
        <dbReference type="ChEBI" id="CHEBI:57844"/>
        <dbReference type="ChEBI" id="CHEBI:57856"/>
        <dbReference type="ChEBI" id="CHEBI:59789"/>
        <dbReference type="ChEBI" id="CHEBI:64428"/>
        <dbReference type="ChEBI" id="CHEBI:74415"/>
        <dbReference type="ChEBI" id="CHEBI:74417"/>
        <dbReference type="EC" id="2.8.4.3"/>
    </reaction>
</comment>
<comment type="cofactor">
    <cofactor evidence="1">
        <name>[4Fe-4S] cluster</name>
        <dbReference type="ChEBI" id="CHEBI:49883"/>
    </cofactor>
    <text evidence="1">Binds 2 [4Fe-4S] clusters. One cluster is coordinated with 3 cysteines and an exchangeable S-adenosyl-L-methionine.</text>
</comment>
<comment type="subunit">
    <text evidence="1">Monomer.</text>
</comment>
<comment type="subcellular location">
    <subcellularLocation>
        <location evidence="1">Cytoplasm</location>
    </subcellularLocation>
</comment>
<comment type="similarity">
    <text evidence="1">Belongs to the methylthiotransferase family. MiaB subfamily.</text>
</comment>
<reference key="1">
    <citation type="journal article" date="2002" name="Nucleic Acids Res.">
        <title>The complete genomic sequence of Mycoplasma penetrans, an intracellular bacterial pathogen in humans.</title>
        <authorList>
            <person name="Sasaki Y."/>
            <person name="Ishikawa J."/>
            <person name="Yamashita A."/>
            <person name="Oshima K."/>
            <person name="Kenri T."/>
            <person name="Furuya K."/>
            <person name="Yoshino C."/>
            <person name="Horino A."/>
            <person name="Shiba T."/>
            <person name="Sasaki T."/>
            <person name="Hattori M."/>
        </authorList>
    </citation>
    <scope>NUCLEOTIDE SEQUENCE [LARGE SCALE GENOMIC DNA]</scope>
    <source>
        <strain>HF-2</strain>
    </source>
</reference>
<protein>
    <recommendedName>
        <fullName evidence="1">tRNA-2-methylthio-N(6)-dimethylallyladenosine synthase</fullName>
        <ecNumber evidence="1">2.8.4.3</ecNumber>
    </recommendedName>
    <alternativeName>
        <fullName evidence="1">(Dimethylallyl)adenosine tRNA methylthiotransferase MiaB</fullName>
    </alternativeName>
    <alternativeName>
        <fullName evidence="1">tRNA-i(6)A37 methylthiotransferase</fullName>
    </alternativeName>
</protein>
<organism>
    <name type="scientific">Malacoplasma penetrans (strain HF-2)</name>
    <name type="common">Mycoplasma penetrans</name>
    <dbReference type="NCBI Taxonomy" id="272633"/>
    <lineage>
        <taxon>Bacteria</taxon>
        <taxon>Bacillati</taxon>
        <taxon>Mycoplasmatota</taxon>
        <taxon>Mycoplasmoidales</taxon>
        <taxon>Mycoplasmoidaceae</taxon>
        <taxon>Malacoplasma</taxon>
    </lineage>
</organism>
<sequence length="491" mass="56294">MKSHIMDSKSTKKRDLSKYFLPDIRQARKRIKKADIIKDGFEIPANIINYGEGKTYHIKTFGCQSNLRDTEVMMGMLELIGYEYNEDVNTSDLVLLNTCAVREHAESKVFADIGILDRIKKSNPNFIFGVCGCMAQEEAVVNRILKSNFNVDFIFGTHNVHRILNLLEQVIFEKNLVVEVWSHEGNVIENLPSKRTNNLKGFVNVMYGCDKFCTYCIVPMTRGKIRSRRKEDILDEVHQMISEGYKEVTLIGQNVNSYGIDFDNGENYLFNNLLEDVAKTGIERVRFTTSNPWNFTRSIVDTMKKYPNIMPHIHLPIQSGDETILKKMNRPMKIGDYIDLVDYIRANIPNCSITTDLIVGFPNETKEQFNKTLELYKRIEFDNAFTFIYSKRDGTVAAIIPDEIPLSEKKERLQELNEMVKTFSKKNNEKYVNKVLDVLVDGPSKKDKTVISGYSPQWKVVNFTGSAKSGEIVKVLITSASRFTLNGKMID</sequence>
<accession>Q8EUX4</accession>
<keyword id="KW-0004">4Fe-4S</keyword>
<keyword id="KW-0963">Cytoplasm</keyword>
<keyword id="KW-0408">Iron</keyword>
<keyword id="KW-0411">Iron-sulfur</keyword>
<keyword id="KW-0479">Metal-binding</keyword>
<keyword id="KW-1185">Reference proteome</keyword>
<keyword id="KW-0949">S-adenosyl-L-methionine</keyword>
<keyword id="KW-0808">Transferase</keyword>
<keyword id="KW-0819">tRNA processing</keyword>
<feature type="chain" id="PRO_0000374397" description="tRNA-2-methylthio-N(6)-dimethylallyladenosine synthase">
    <location>
        <begin position="1"/>
        <end position="491"/>
    </location>
</feature>
<feature type="domain" description="MTTase N-terminal" evidence="1">
    <location>
        <begin position="54"/>
        <end position="172"/>
    </location>
</feature>
<feature type="domain" description="Radical SAM core" evidence="2">
    <location>
        <begin position="195"/>
        <end position="426"/>
    </location>
</feature>
<feature type="domain" description="TRAM" evidence="1">
    <location>
        <begin position="429"/>
        <end position="491"/>
    </location>
</feature>
<feature type="binding site" evidence="1">
    <location>
        <position position="63"/>
    </location>
    <ligand>
        <name>[4Fe-4S] cluster</name>
        <dbReference type="ChEBI" id="CHEBI:49883"/>
        <label>1</label>
    </ligand>
</feature>
<feature type="binding site" evidence="1">
    <location>
        <position position="99"/>
    </location>
    <ligand>
        <name>[4Fe-4S] cluster</name>
        <dbReference type="ChEBI" id="CHEBI:49883"/>
        <label>1</label>
    </ligand>
</feature>
<feature type="binding site" evidence="1">
    <location>
        <position position="133"/>
    </location>
    <ligand>
        <name>[4Fe-4S] cluster</name>
        <dbReference type="ChEBI" id="CHEBI:49883"/>
        <label>1</label>
    </ligand>
</feature>
<feature type="binding site" evidence="1">
    <location>
        <position position="209"/>
    </location>
    <ligand>
        <name>[4Fe-4S] cluster</name>
        <dbReference type="ChEBI" id="CHEBI:49883"/>
        <label>2</label>
        <note>4Fe-4S-S-AdoMet</note>
    </ligand>
</feature>
<feature type="binding site" evidence="1">
    <location>
        <position position="213"/>
    </location>
    <ligand>
        <name>[4Fe-4S] cluster</name>
        <dbReference type="ChEBI" id="CHEBI:49883"/>
        <label>2</label>
        <note>4Fe-4S-S-AdoMet</note>
    </ligand>
</feature>
<feature type="binding site" evidence="1">
    <location>
        <position position="216"/>
    </location>
    <ligand>
        <name>[4Fe-4S] cluster</name>
        <dbReference type="ChEBI" id="CHEBI:49883"/>
        <label>2</label>
        <note>4Fe-4S-S-AdoMet</note>
    </ligand>
</feature>